<evidence type="ECO:0000250" key="1"/>
<evidence type="ECO:0000305" key="2"/>
<organism>
    <name type="scientific">Cupriavidus metallidurans (strain ATCC 43123 / DSM 2839 / NBRC 102507 / CH34)</name>
    <name type="common">Ralstonia metallidurans</name>
    <dbReference type="NCBI Taxonomy" id="266264"/>
    <lineage>
        <taxon>Bacteria</taxon>
        <taxon>Pseudomonadati</taxon>
        <taxon>Pseudomonadota</taxon>
        <taxon>Betaproteobacteria</taxon>
        <taxon>Burkholderiales</taxon>
        <taxon>Burkholderiaceae</taxon>
        <taxon>Cupriavidus</taxon>
    </lineage>
</organism>
<protein>
    <recommendedName>
        <fullName>Ferric uptake regulation protein</fullName>
        <shortName>Ferric uptake regulator</shortName>
    </recommendedName>
</protein>
<keyword id="KW-0963">Cytoplasm</keyword>
<keyword id="KW-0238">DNA-binding</keyword>
<keyword id="KW-0408">Iron</keyword>
<keyword id="KW-0479">Metal-binding</keyword>
<keyword id="KW-1185">Reference proteome</keyword>
<keyword id="KW-0678">Repressor</keyword>
<keyword id="KW-0804">Transcription</keyword>
<keyword id="KW-0805">Transcription regulation</keyword>
<keyword id="KW-0862">Zinc</keyword>
<proteinExistence type="inferred from homology"/>
<reference key="1">
    <citation type="submission" date="1997-08" db="EMBL/GenBank/DDBJ databases">
        <title>Identification and regulation of the Alcaligenes eutrophus CH34 fur gene.</title>
        <authorList>
            <person name="Gilis A."/>
            <person name="Borremans B."/>
            <person name="Cornelis P."/>
            <person name="Mergeay M."/>
            <person name="van der Lelie D."/>
        </authorList>
    </citation>
    <scope>NUCLEOTIDE SEQUENCE [GENOMIC DNA]</scope>
</reference>
<reference key="2">
    <citation type="journal article" date="2010" name="PLoS ONE">
        <title>The complete genome sequence of Cupriavidus metallidurans strain CH34, a master survivalist in harsh and anthropogenic environments.</title>
        <authorList>
            <person name="Janssen P.J."/>
            <person name="Van Houdt R."/>
            <person name="Moors H."/>
            <person name="Monsieurs P."/>
            <person name="Morin N."/>
            <person name="Michaux A."/>
            <person name="Benotmane M.A."/>
            <person name="Leys N."/>
            <person name="Vallaeys T."/>
            <person name="Lapidus A."/>
            <person name="Monchy S."/>
            <person name="Medigue C."/>
            <person name="Taghavi S."/>
            <person name="McCorkle S."/>
            <person name="Dunn J."/>
            <person name="van der Lelie D."/>
            <person name="Mergeay M."/>
        </authorList>
    </citation>
    <scope>NUCLEOTIDE SEQUENCE [LARGE SCALE GENOMIC DNA]</scope>
    <source>
        <strain>ATCC 43123 / DSM 2839 / NBRC 102507 / CH34</strain>
    </source>
</reference>
<sequence>MPSPADLKNIGLKATVPRLKILEIFQTSEQRHLSAEDVYRILLNEHMDIGLATVYRVLTQFEQAGLLSRNNFESGKAIFELNEGKHHDHLVCLDCGRVEEFFDADIEQRQQSIARERGFALQEHALSLYGNCTKDDCPHRPRR</sequence>
<dbReference type="EMBL" id="AJ001224">
    <property type="protein sequence ID" value="CAA04620.1"/>
    <property type="molecule type" value="Genomic_DNA"/>
</dbReference>
<dbReference type="EMBL" id="CP000352">
    <property type="protein sequence ID" value="ABF09849.1"/>
    <property type="molecule type" value="Genomic_DNA"/>
</dbReference>
<dbReference type="RefSeq" id="WP_008648581.1">
    <property type="nucleotide sequence ID" value="NC_007973.1"/>
</dbReference>
<dbReference type="SMR" id="O30330"/>
<dbReference type="STRING" id="266264.Rmet_2976"/>
<dbReference type="GeneID" id="60820587"/>
<dbReference type="KEGG" id="rme:Rmet_2976"/>
<dbReference type="eggNOG" id="COG0735">
    <property type="taxonomic scope" value="Bacteria"/>
</dbReference>
<dbReference type="HOGENOM" id="CLU_096072_3_3_4"/>
<dbReference type="Proteomes" id="UP000002429">
    <property type="component" value="Chromosome"/>
</dbReference>
<dbReference type="GO" id="GO:0005829">
    <property type="term" value="C:cytosol"/>
    <property type="evidence" value="ECO:0007669"/>
    <property type="project" value="TreeGrafter"/>
</dbReference>
<dbReference type="GO" id="GO:0003700">
    <property type="term" value="F:DNA-binding transcription factor activity"/>
    <property type="evidence" value="ECO:0007669"/>
    <property type="project" value="InterPro"/>
</dbReference>
<dbReference type="GO" id="GO:0000976">
    <property type="term" value="F:transcription cis-regulatory region binding"/>
    <property type="evidence" value="ECO:0007669"/>
    <property type="project" value="TreeGrafter"/>
</dbReference>
<dbReference type="GO" id="GO:0008270">
    <property type="term" value="F:zinc ion binding"/>
    <property type="evidence" value="ECO:0007669"/>
    <property type="project" value="TreeGrafter"/>
</dbReference>
<dbReference type="GO" id="GO:0045892">
    <property type="term" value="P:negative regulation of DNA-templated transcription"/>
    <property type="evidence" value="ECO:0007669"/>
    <property type="project" value="TreeGrafter"/>
</dbReference>
<dbReference type="GO" id="GO:1900705">
    <property type="term" value="P:negative regulation of siderophore biosynthetic process"/>
    <property type="evidence" value="ECO:0007669"/>
    <property type="project" value="TreeGrafter"/>
</dbReference>
<dbReference type="CDD" id="cd07153">
    <property type="entry name" value="Fur_like"/>
    <property type="match status" value="1"/>
</dbReference>
<dbReference type="FunFam" id="1.10.10.10:FF:000007">
    <property type="entry name" value="Ferric uptake regulation protein"/>
    <property type="match status" value="1"/>
</dbReference>
<dbReference type="FunFam" id="3.30.1490.190:FF:000001">
    <property type="entry name" value="Ferric uptake regulation protein"/>
    <property type="match status" value="1"/>
</dbReference>
<dbReference type="Gene3D" id="3.30.1490.190">
    <property type="match status" value="1"/>
</dbReference>
<dbReference type="Gene3D" id="1.10.10.10">
    <property type="entry name" value="Winged helix-like DNA-binding domain superfamily/Winged helix DNA-binding domain"/>
    <property type="match status" value="1"/>
</dbReference>
<dbReference type="InterPro" id="IPR002481">
    <property type="entry name" value="FUR"/>
</dbReference>
<dbReference type="InterPro" id="IPR043135">
    <property type="entry name" value="Fur_C"/>
</dbReference>
<dbReference type="InterPro" id="IPR036388">
    <property type="entry name" value="WH-like_DNA-bd_sf"/>
</dbReference>
<dbReference type="InterPro" id="IPR036390">
    <property type="entry name" value="WH_DNA-bd_sf"/>
</dbReference>
<dbReference type="NCBIfam" id="NF006999">
    <property type="entry name" value="PRK09462.1"/>
    <property type="match status" value="1"/>
</dbReference>
<dbReference type="PANTHER" id="PTHR33202:SF2">
    <property type="entry name" value="FERRIC UPTAKE REGULATION PROTEIN"/>
    <property type="match status" value="1"/>
</dbReference>
<dbReference type="PANTHER" id="PTHR33202">
    <property type="entry name" value="ZINC UPTAKE REGULATION PROTEIN"/>
    <property type="match status" value="1"/>
</dbReference>
<dbReference type="Pfam" id="PF01475">
    <property type="entry name" value="FUR"/>
    <property type="match status" value="1"/>
</dbReference>
<dbReference type="SUPFAM" id="SSF46785">
    <property type="entry name" value="Winged helix' DNA-binding domain"/>
    <property type="match status" value="1"/>
</dbReference>
<gene>
    <name type="primary">fur</name>
    <name type="synonym">aleO</name>
    <name type="ordered locus">Rmet_2976</name>
</gene>
<accession>O30330</accession>
<accession>Q1LJ27</accession>
<name>FUR_CUPMC</name>
<feature type="chain" id="PRO_0000095540" description="Ferric uptake regulation protein">
    <location>
        <begin position="1"/>
        <end position="143"/>
    </location>
</feature>
<feature type="region of interest" description="DNA-binding" evidence="1">
    <location>
        <begin position="1"/>
        <end position="83"/>
    </location>
</feature>
<feature type="region of interest" description="Dimerization" evidence="1">
    <location>
        <begin position="84"/>
        <end position="143"/>
    </location>
</feature>
<feature type="binding site" evidence="1">
    <location>
        <position position="32"/>
    </location>
    <ligand>
        <name>Zn(2+)</name>
        <dbReference type="ChEBI" id="CHEBI:29105"/>
    </ligand>
</feature>
<feature type="binding site" evidence="1">
    <location>
        <position position="80"/>
    </location>
    <ligand>
        <name>Zn(2+)</name>
        <dbReference type="ChEBI" id="CHEBI:29105"/>
    </ligand>
</feature>
<feature type="binding site" evidence="1">
    <location>
        <position position="86"/>
    </location>
    <ligand>
        <name>Fe cation</name>
        <dbReference type="ChEBI" id="CHEBI:24875"/>
    </ligand>
</feature>
<feature type="binding site" evidence="1">
    <location>
        <position position="88"/>
    </location>
    <ligand>
        <name>Fe cation</name>
        <dbReference type="ChEBI" id="CHEBI:24875"/>
    </ligand>
</feature>
<feature type="binding site" evidence="1">
    <location>
        <position position="89"/>
    </location>
    <ligand>
        <name>Zn(2+)</name>
        <dbReference type="ChEBI" id="CHEBI:29105"/>
    </ligand>
</feature>
<feature type="binding site" evidence="1">
    <location>
        <position position="92"/>
    </location>
    <ligand>
        <name>Zn(2+)</name>
        <dbReference type="ChEBI" id="CHEBI:29105"/>
    </ligand>
</feature>
<feature type="binding site" evidence="1">
    <location>
        <position position="95"/>
    </location>
    <ligand>
        <name>Zn(2+)</name>
        <dbReference type="ChEBI" id="CHEBI:29105"/>
    </ligand>
</feature>
<feature type="binding site" evidence="1">
    <location>
        <position position="100"/>
    </location>
    <ligand>
        <name>Zn(2+)</name>
        <dbReference type="ChEBI" id="CHEBI:29105"/>
    </ligand>
</feature>
<feature type="binding site" evidence="1">
    <location>
        <position position="107"/>
    </location>
    <ligand>
        <name>Fe cation</name>
        <dbReference type="ChEBI" id="CHEBI:24875"/>
    </ligand>
</feature>
<feature type="binding site" evidence="1">
    <location>
        <position position="124"/>
    </location>
    <ligand>
        <name>Fe cation</name>
        <dbReference type="ChEBI" id="CHEBI:24875"/>
    </ligand>
</feature>
<comment type="function">
    <text>Acts as a global negative controlling element, employing Fe(2+) as a cofactor to bind the operator of the repressed genes. Regulator for biosynthesis of the siderophore alcaligin E.</text>
</comment>
<comment type="subunit">
    <text evidence="1">Homodimer.</text>
</comment>
<comment type="subcellular location">
    <subcellularLocation>
        <location evidence="1">Cytoplasm</location>
    </subcellularLocation>
</comment>
<comment type="similarity">
    <text evidence="2">Belongs to the Fur family.</text>
</comment>